<dbReference type="EMBL" id="CP000143">
    <property type="protein sequence ID" value="ABA80066.1"/>
    <property type="molecule type" value="Genomic_DNA"/>
</dbReference>
<dbReference type="RefSeq" id="WP_002721091.1">
    <property type="nucleotide sequence ID" value="NZ_CP030271.1"/>
</dbReference>
<dbReference type="RefSeq" id="YP_353967.1">
    <property type="nucleotide sequence ID" value="NC_007493.2"/>
</dbReference>
<dbReference type="SMR" id="Q3IZG8"/>
<dbReference type="STRING" id="272943.RSP_0883"/>
<dbReference type="EnsemblBacteria" id="ABA80066">
    <property type="protein sequence ID" value="ABA80066"/>
    <property type="gene ID" value="RSP_0883"/>
</dbReference>
<dbReference type="GeneID" id="67447639"/>
<dbReference type="KEGG" id="rsp:RSP_0883"/>
<dbReference type="PATRIC" id="fig|272943.9.peg.2849"/>
<dbReference type="eggNOG" id="COG0691">
    <property type="taxonomic scope" value="Bacteria"/>
</dbReference>
<dbReference type="OrthoDB" id="9805462at2"/>
<dbReference type="PhylomeDB" id="Q3IZG8"/>
<dbReference type="Proteomes" id="UP000002703">
    <property type="component" value="Chromosome 1"/>
</dbReference>
<dbReference type="GO" id="GO:0005829">
    <property type="term" value="C:cytosol"/>
    <property type="evidence" value="ECO:0007669"/>
    <property type="project" value="TreeGrafter"/>
</dbReference>
<dbReference type="GO" id="GO:0003723">
    <property type="term" value="F:RNA binding"/>
    <property type="evidence" value="ECO:0007669"/>
    <property type="project" value="UniProtKB-UniRule"/>
</dbReference>
<dbReference type="GO" id="GO:0070929">
    <property type="term" value="P:trans-translation"/>
    <property type="evidence" value="ECO:0007669"/>
    <property type="project" value="UniProtKB-UniRule"/>
</dbReference>
<dbReference type="CDD" id="cd09294">
    <property type="entry name" value="SmpB"/>
    <property type="match status" value="1"/>
</dbReference>
<dbReference type="Gene3D" id="2.40.280.10">
    <property type="match status" value="1"/>
</dbReference>
<dbReference type="HAMAP" id="MF_00023">
    <property type="entry name" value="SmpB"/>
    <property type="match status" value="1"/>
</dbReference>
<dbReference type="InterPro" id="IPR023620">
    <property type="entry name" value="SmpB"/>
</dbReference>
<dbReference type="InterPro" id="IPR000037">
    <property type="entry name" value="SsrA-bd_prot"/>
</dbReference>
<dbReference type="InterPro" id="IPR020081">
    <property type="entry name" value="SsrA-bd_prot_CS"/>
</dbReference>
<dbReference type="NCBIfam" id="NF003843">
    <property type="entry name" value="PRK05422.1"/>
    <property type="match status" value="1"/>
</dbReference>
<dbReference type="NCBIfam" id="TIGR00086">
    <property type="entry name" value="smpB"/>
    <property type="match status" value="1"/>
</dbReference>
<dbReference type="PANTHER" id="PTHR30308:SF2">
    <property type="entry name" value="SSRA-BINDING PROTEIN"/>
    <property type="match status" value="1"/>
</dbReference>
<dbReference type="PANTHER" id="PTHR30308">
    <property type="entry name" value="TMRNA-BINDING COMPONENT OF TRANS-TRANSLATION TAGGING COMPLEX"/>
    <property type="match status" value="1"/>
</dbReference>
<dbReference type="Pfam" id="PF01668">
    <property type="entry name" value="SmpB"/>
    <property type="match status" value="1"/>
</dbReference>
<dbReference type="SUPFAM" id="SSF74982">
    <property type="entry name" value="Small protein B (SmpB)"/>
    <property type="match status" value="1"/>
</dbReference>
<dbReference type="PROSITE" id="PS01317">
    <property type="entry name" value="SSRP"/>
    <property type="match status" value="1"/>
</dbReference>
<reference key="1">
    <citation type="submission" date="2005-09" db="EMBL/GenBank/DDBJ databases">
        <title>Complete sequence of chromosome 1 of Rhodobacter sphaeroides 2.4.1.</title>
        <authorList>
            <person name="Copeland A."/>
            <person name="Lucas S."/>
            <person name="Lapidus A."/>
            <person name="Barry K."/>
            <person name="Detter J.C."/>
            <person name="Glavina T."/>
            <person name="Hammon N."/>
            <person name="Israni S."/>
            <person name="Pitluck S."/>
            <person name="Richardson P."/>
            <person name="Mackenzie C."/>
            <person name="Choudhary M."/>
            <person name="Larimer F."/>
            <person name="Hauser L.J."/>
            <person name="Land M."/>
            <person name="Donohue T.J."/>
            <person name="Kaplan S."/>
        </authorList>
    </citation>
    <scope>NUCLEOTIDE SEQUENCE [LARGE SCALE GENOMIC DNA]</scope>
    <source>
        <strain>ATCC 17023 / DSM 158 / JCM 6121 / CCUG 31486 / LMG 2827 / NBRC 12203 / NCIMB 8253 / ATH 2.4.1.</strain>
    </source>
</reference>
<keyword id="KW-0963">Cytoplasm</keyword>
<keyword id="KW-1185">Reference proteome</keyword>
<keyword id="KW-0694">RNA-binding</keyword>
<accession>Q3IZG8</accession>
<gene>
    <name evidence="1" type="primary">smpB</name>
    <name type="ordered locus">RHOS4_24980</name>
    <name type="ORF">RSP_0883</name>
</gene>
<comment type="function">
    <text evidence="1">Required for rescue of stalled ribosomes mediated by trans-translation. Binds to transfer-messenger RNA (tmRNA), required for stable association of tmRNA with ribosomes. tmRNA and SmpB together mimic tRNA shape, replacing the anticodon stem-loop with SmpB. tmRNA is encoded by the ssrA gene; the 2 termini fold to resemble tRNA(Ala) and it encodes a 'tag peptide', a short internal open reading frame. During trans-translation Ala-aminoacylated tmRNA acts like a tRNA, entering the A-site of stalled ribosomes, displacing the stalled mRNA. The ribosome then switches to translate the ORF on the tmRNA; the nascent peptide is terminated with the 'tag peptide' encoded by the tmRNA and targeted for degradation. The ribosome is freed to recommence translation, which seems to be the essential function of trans-translation.</text>
</comment>
<comment type="subcellular location">
    <subcellularLocation>
        <location evidence="1">Cytoplasm</location>
    </subcellularLocation>
    <text evidence="1">The tmRNA-SmpB complex associates with stalled 70S ribosomes.</text>
</comment>
<comment type="similarity">
    <text evidence="1">Belongs to the SmpB family.</text>
</comment>
<sequence>MAKHSDPNSKLIAENRRARFDYFIEEEIEAGIMLLGSEVKSLRQGGSNIGESYASVEEGELWLINGYIAPYLQAKTWGHEERRKRKLLVSRRELARLWTATAREGMTIVPIRMYFNDRGIVKLKIGIAKGKKLSDKRETSAKRDWSREKQRLLKQNS</sequence>
<feature type="chain" id="PRO_0000331084" description="SsrA-binding protein">
    <location>
        <begin position="1"/>
        <end position="157"/>
    </location>
</feature>
<feature type="region of interest" description="Disordered" evidence="2">
    <location>
        <begin position="136"/>
        <end position="157"/>
    </location>
</feature>
<feature type="compositionally biased region" description="Basic and acidic residues" evidence="2">
    <location>
        <begin position="136"/>
        <end position="151"/>
    </location>
</feature>
<protein>
    <recommendedName>
        <fullName evidence="1">SsrA-binding protein</fullName>
    </recommendedName>
    <alternativeName>
        <fullName evidence="1">Small protein B</fullName>
    </alternativeName>
</protein>
<evidence type="ECO:0000255" key="1">
    <source>
        <dbReference type="HAMAP-Rule" id="MF_00023"/>
    </source>
</evidence>
<evidence type="ECO:0000256" key="2">
    <source>
        <dbReference type="SAM" id="MobiDB-lite"/>
    </source>
</evidence>
<proteinExistence type="inferred from homology"/>
<name>SSRP_CERS4</name>
<organism>
    <name type="scientific">Cereibacter sphaeroides (strain ATCC 17023 / DSM 158 / JCM 6121 / CCUG 31486 / LMG 2827 / NBRC 12203 / NCIMB 8253 / ATH 2.4.1.)</name>
    <name type="common">Rhodobacter sphaeroides</name>
    <dbReference type="NCBI Taxonomy" id="272943"/>
    <lineage>
        <taxon>Bacteria</taxon>
        <taxon>Pseudomonadati</taxon>
        <taxon>Pseudomonadota</taxon>
        <taxon>Alphaproteobacteria</taxon>
        <taxon>Rhodobacterales</taxon>
        <taxon>Paracoccaceae</taxon>
        <taxon>Cereibacter</taxon>
    </lineage>
</organism>